<accession>C3K9Q0</accession>
<gene>
    <name evidence="1" type="primary">gloB</name>
    <name type="ordered locus">PFLU_2643</name>
</gene>
<sequence length="255" mass="28378">MIQISALPAFTDNYIWLLQDPHTQRCAVVDPGDAAPVLDWLEQNPGWALSDILVTHHHHDHVGGVEQLKGATNAKVYGPANEKIPARDVALNDNDRITVLGWDFDIYTVPGHTLGHITFYHSGVLLCGDTLFAAGCGRLFEGTPEQMYTSLERLAALPADTRVYCTHEYTQSNLKFAQAVEPDNADIAERVESVRQLRARGEITLPSNLALERLTNPFLRTSETSVKQKADERNGRDNRSGAEVFASLRAWKDKF</sequence>
<proteinExistence type="inferred from homology"/>
<reference key="1">
    <citation type="journal article" date="2009" name="Genome Biol.">
        <title>Genomic and genetic analyses of diversity and plant interactions of Pseudomonas fluorescens.</title>
        <authorList>
            <person name="Silby M.W."/>
            <person name="Cerdeno-Tarraga A.M."/>
            <person name="Vernikos G.S."/>
            <person name="Giddens S.R."/>
            <person name="Jackson R.W."/>
            <person name="Preston G.M."/>
            <person name="Zhang X.-X."/>
            <person name="Moon C.D."/>
            <person name="Gehrig S.M."/>
            <person name="Godfrey S.A.C."/>
            <person name="Knight C.G."/>
            <person name="Malone J.G."/>
            <person name="Robinson Z."/>
            <person name="Spiers A.J."/>
            <person name="Harris S."/>
            <person name="Challis G.L."/>
            <person name="Yaxley A.M."/>
            <person name="Harris D."/>
            <person name="Seeger K."/>
            <person name="Murphy L."/>
            <person name="Rutter S."/>
            <person name="Squares R."/>
            <person name="Quail M.A."/>
            <person name="Saunders E."/>
            <person name="Mavromatis K."/>
            <person name="Brettin T.S."/>
            <person name="Bentley S.D."/>
            <person name="Hothersall J."/>
            <person name="Stephens E."/>
            <person name="Thomas C.M."/>
            <person name="Parkhill J."/>
            <person name="Levy S.B."/>
            <person name="Rainey P.B."/>
            <person name="Thomson N.R."/>
        </authorList>
    </citation>
    <scope>NUCLEOTIDE SEQUENCE [LARGE SCALE GENOMIC DNA]</scope>
    <source>
        <strain>SBW25</strain>
    </source>
</reference>
<evidence type="ECO:0000255" key="1">
    <source>
        <dbReference type="HAMAP-Rule" id="MF_01374"/>
    </source>
</evidence>
<name>GLO2_PSEFS</name>
<keyword id="KW-0378">Hydrolase</keyword>
<keyword id="KW-0479">Metal-binding</keyword>
<keyword id="KW-0862">Zinc</keyword>
<protein>
    <recommendedName>
        <fullName evidence="1">Hydroxyacylglutathione hydrolase</fullName>
        <ecNumber evidence="1">3.1.2.6</ecNumber>
    </recommendedName>
    <alternativeName>
        <fullName evidence="1">Glyoxalase II</fullName>
        <shortName evidence="1">Glx II</shortName>
    </alternativeName>
</protein>
<dbReference type="EC" id="3.1.2.6" evidence="1"/>
<dbReference type="EMBL" id="AM181176">
    <property type="protein sequence ID" value="CAY48876.1"/>
    <property type="molecule type" value="Genomic_DNA"/>
</dbReference>
<dbReference type="RefSeq" id="WP_012723840.1">
    <property type="nucleotide sequence ID" value="NC_012660.1"/>
</dbReference>
<dbReference type="SMR" id="C3K9Q0"/>
<dbReference type="STRING" id="294.SRM1_02216"/>
<dbReference type="PATRIC" id="fig|216595.4.peg.2846"/>
<dbReference type="eggNOG" id="COG0491">
    <property type="taxonomic scope" value="Bacteria"/>
</dbReference>
<dbReference type="HOGENOM" id="CLU_030571_4_1_6"/>
<dbReference type="OrthoDB" id="9802248at2"/>
<dbReference type="UniPathway" id="UPA00619">
    <property type="reaction ID" value="UER00676"/>
</dbReference>
<dbReference type="GO" id="GO:0004416">
    <property type="term" value="F:hydroxyacylglutathione hydrolase activity"/>
    <property type="evidence" value="ECO:0007669"/>
    <property type="project" value="UniProtKB-UniRule"/>
</dbReference>
<dbReference type="GO" id="GO:0046872">
    <property type="term" value="F:metal ion binding"/>
    <property type="evidence" value="ECO:0007669"/>
    <property type="project" value="UniProtKB-KW"/>
</dbReference>
<dbReference type="GO" id="GO:0019243">
    <property type="term" value="P:methylglyoxal catabolic process to D-lactate via S-lactoyl-glutathione"/>
    <property type="evidence" value="ECO:0007669"/>
    <property type="project" value="InterPro"/>
</dbReference>
<dbReference type="CDD" id="cd07723">
    <property type="entry name" value="hydroxyacylglutathione_hydrolase_MBL-fold"/>
    <property type="match status" value="1"/>
</dbReference>
<dbReference type="Gene3D" id="3.60.15.10">
    <property type="entry name" value="Ribonuclease Z/Hydroxyacylglutathione hydrolase-like"/>
    <property type="match status" value="1"/>
</dbReference>
<dbReference type="HAMAP" id="MF_01374">
    <property type="entry name" value="Glyoxalase_2"/>
    <property type="match status" value="1"/>
</dbReference>
<dbReference type="InterPro" id="IPR035680">
    <property type="entry name" value="Clx_II_MBL"/>
</dbReference>
<dbReference type="InterPro" id="IPR050110">
    <property type="entry name" value="Glyoxalase_II_hydrolase"/>
</dbReference>
<dbReference type="InterPro" id="IPR032282">
    <property type="entry name" value="HAGH_C"/>
</dbReference>
<dbReference type="InterPro" id="IPR017782">
    <property type="entry name" value="Hydroxyacylglutathione_Hdrlase"/>
</dbReference>
<dbReference type="InterPro" id="IPR001279">
    <property type="entry name" value="Metallo-B-lactamas"/>
</dbReference>
<dbReference type="InterPro" id="IPR036866">
    <property type="entry name" value="RibonucZ/Hydroxyglut_hydro"/>
</dbReference>
<dbReference type="NCBIfam" id="TIGR03413">
    <property type="entry name" value="GSH_gloB"/>
    <property type="match status" value="1"/>
</dbReference>
<dbReference type="PANTHER" id="PTHR43705">
    <property type="entry name" value="HYDROXYACYLGLUTATHIONE HYDROLASE"/>
    <property type="match status" value="1"/>
</dbReference>
<dbReference type="PANTHER" id="PTHR43705:SF1">
    <property type="entry name" value="HYDROXYACYLGLUTATHIONE HYDROLASE GLOB"/>
    <property type="match status" value="1"/>
</dbReference>
<dbReference type="Pfam" id="PF16123">
    <property type="entry name" value="HAGH_C"/>
    <property type="match status" value="1"/>
</dbReference>
<dbReference type="Pfam" id="PF00753">
    <property type="entry name" value="Lactamase_B"/>
    <property type="match status" value="1"/>
</dbReference>
<dbReference type="PIRSF" id="PIRSF005457">
    <property type="entry name" value="Glx"/>
    <property type="match status" value="1"/>
</dbReference>
<dbReference type="SMART" id="SM00849">
    <property type="entry name" value="Lactamase_B"/>
    <property type="match status" value="1"/>
</dbReference>
<dbReference type="SUPFAM" id="SSF56281">
    <property type="entry name" value="Metallo-hydrolase/oxidoreductase"/>
    <property type="match status" value="1"/>
</dbReference>
<feature type="chain" id="PRO_1000215087" description="Hydroxyacylglutathione hydrolase">
    <location>
        <begin position="1"/>
        <end position="255"/>
    </location>
</feature>
<feature type="binding site" evidence="1">
    <location>
        <position position="56"/>
    </location>
    <ligand>
        <name>Zn(2+)</name>
        <dbReference type="ChEBI" id="CHEBI:29105"/>
        <label>1</label>
    </ligand>
</feature>
<feature type="binding site" evidence="1">
    <location>
        <position position="58"/>
    </location>
    <ligand>
        <name>Zn(2+)</name>
        <dbReference type="ChEBI" id="CHEBI:29105"/>
        <label>1</label>
    </ligand>
</feature>
<feature type="binding site" evidence="1">
    <location>
        <position position="60"/>
    </location>
    <ligand>
        <name>Zn(2+)</name>
        <dbReference type="ChEBI" id="CHEBI:29105"/>
        <label>2</label>
    </ligand>
</feature>
<feature type="binding site" evidence="1">
    <location>
        <position position="61"/>
    </location>
    <ligand>
        <name>Zn(2+)</name>
        <dbReference type="ChEBI" id="CHEBI:29105"/>
        <label>2</label>
    </ligand>
</feature>
<feature type="binding site" evidence="1">
    <location>
        <position position="112"/>
    </location>
    <ligand>
        <name>Zn(2+)</name>
        <dbReference type="ChEBI" id="CHEBI:29105"/>
        <label>1</label>
    </ligand>
</feature>
<feature type="binding site" evidence="1">
    <location>
        <position position="129"/>
    </location>
    <ligand>
        <name>Zn(2+)</name>
        <dbReference type="ChEBI" id="CHEBI:29105"/>
        <label>1</label>
    </ligand>
</feature>
<feature type="binding site" evidence="1">
    <location>
        <position position="129"/>
    </location>
    <ligand>
        <name>Zn(2+)</name>
        <dbReference type="ChEBI" id="CHEBI:29105"/>
        <label>2</label>
    </ligand>
</feature>
<feature type="binding site" evidence="1">
    <location>
        <position position="167"/>
    </location>
    <ligand>
        <name>Zn(2+)</name>
        <dbReference type="ChEBI" id="CHEBI:29105"/>
        <label>2</label>
    </ligand>
</feature>
<organism>
    <name type="scientific">Pseudomonas fluorescens (strain SBW25)</name>
    <dbReference type="NCBI Taxonomy" id="216595"/>
    <lineage>
        <taxon>Bacteria</taxon>
        <taxon>Pseudomonadati</taxon>
        <taxon>Pseudomonadota</taxon>
        <taxon>Gammaproteobacteria</taxon>
        <taxon>Pseudomonadales</taxon>
        <taxon>Pseudomonadaceae</taxon>
        <taxon>Pseudomonas</taxon>
    </lineage>
</organism>
<comment type="function">
    <text evidence="1">Thiolesterase that catalyzes the hydrolysis of S-D-lactoyl-glutathione to form glutathione and D-lactic acid.</text>
</comment>
<comment type="catalytic activity">
    <reaction evidence="1">
        <text>an S-(2-hydroxyacyl)glutathione + H2O = a 2-hydroxy carboxylate + glutathione + H(+)</text>
        <dbReference type="Rhea" id="RHEA:21864"/>
        <dbReference type="ChEBI" id="CHEBI:15377"/>
        <dbReference type="ChEBI" id="CHEBI:15378"/>
        <dbReference type="ChEBI" id="CHEBI:57925"/>
        <dbReference type="ChEBI" id="CHEBI:58896"/>
        <dbReference type="ChEBI" id="CHEBI:71261"/>
        <dbReference type="EC" id="3.1.2.6"/>
    </reaction>
</comment>
<comment type="cofactor">
    <cofactor evidence="1">
        <name>Zn(2+)</name>
        <dbReference type="ChEBI" id="CHEBI:29105"/>
    </cofactor>
    <text evidence="1">Binds 2 Zn(2+) ions per subunit.</text>
</comment>
<comment type="pathway">
    <text evidence="1">Secondary metabolite metabolism; methylglyoxal degradation; (R)-lactate from methylglyoxal: step 2/2.</text>
</comment>
<comment type="subunit">
    <text evidence="1">Monomer.</text>
</comment>
<comment type="similarity">
    <text evidence="1">Belongs to the metallo-beta-lactamase superfamily. Glyoxalase II family.</text>
</comment>